<dbReference type="EMBL" id="CP000936">
    <property type="protein sequence ID" value="ACA35738.1"/>
    <property type="molecule type" value="Genomic_DNA"/>
</dbReference>
<dbReference type="SMR" id="B1IBB9"/>
<dbReference type="KEGG" id="spv:SPH_1060"/>
<dbReference type="HOGENOM" id="CLU_054919_3_2_9"/>
<dbReference type="Proteomes" id="UP000002163">
    <property type="component" value="Chromosome"/>
</dbReference>
<dbReference type="GO" id="GO:0005829">
    <property type="term" value="C:cytosol"/>
    <property type="evidence" value="ECO:0007669"/>
    <property type="project" value="TreeGrafter"/>
</dbReference>
<dbReference type="GO" id="GO:0016020">
    <property type="term" value="C:membrane"/>
    <property type="evidence" value="ECO:0007669"/>
    <property type="project" value="TreeGrafter"/>
</dbReference>
<dbReference type="GO" id="GO:0043022">
    <property type="term" value="F:ribosome binding"/>
    <property type="evidence" value="ECO:0007669"/>
    <property type="project" value="TreeGrafter"/>
</dbReference>
<dbReference type="GO" id="GO:0003743">
    <property type="term" value="F:translation initiation factor activity"/>
    <property type="evidence" value="ECO:0007669"/>
    <property type="project" value="UniProtKB-UniRule"/>
</dbReference>
<dbReference type="GO" id="GO:0032790">
    <property type="term" value="P:ribosome disassembly"/>
    <property type="evidence" value="ECO:0007669"/>
    <property type="project" value="TreeGrafter"/>
</dbReference>
<dbReference type="FunFam" id="3.10.20.80:FF:000001">
    <property type="entry name" value="Translation initiation factor IF-3"/>
    <property type="match status" value="1"/>
</dbReference>
<dbReference type="FunFam" id="3.30.110.10:FF:000001">
    <property type="entry name" value="Translation initiation factor IF-3"/>
    <property type="match status" value="1"/>
</dbReference>
<dbReference type="Gene3D" id="3.30.110.10">
    <property type="entry name" value="Translation initiation factor 3 (IF-3), C-terminal domain"/>
    <property type="match status" value="1"/>
</dbReference>
<dbReference type="Gene3D" id="3.10.20.80">
    <property type="entry name" value="Translation initiation factor 3 (IF-3), N-terminal domain"/>
    <property type="match status" value="1"/>
</dbReference>
<dbReference type="HAMAP" id="MF_00080">
    <property type="entry name" value="IF_3"/>
    <property type="match status" value="1"/>
</dbReference>
<dbReference type="InterPro" id="IPR036788">
    <property type="entry name" value="T_IF-3_C_sf"/>
</dbReference>
<dbReference type="InterPro" id="IPR036787">
    <property type="entry name" value="T_IF-3_N_sf"/>
</dbReference>
<dbReference type="InterPro" id="IPR019813">
    <property type="entry name" value="Translation_initiation_fac3_CS"/>
</dbReference>
<dbReference type="InterPro" id="IPR001288">
    <property type="entry name" value="Translation_initiation_fac_3"/>
</dbReference>
<dbReference type="InterPro" id="IPR019815">
    <property type="entry name" value="Translation_initiation_fac_3_C"/>
</dbReference>
<dbReference type="InterPro" id="IPR019814">
    <property type="entry name" value="Translation_initiation_fac_3_N"/>
</dbReference>
<dbReference type="NCBIfam" id="TIGR00168">
    <property type="entry name" value="infC"/>
    <property type="match status" value="1"/>
</dbReference>
<dbReference type="PANTHER" id="PTHR10938">
    <property type="entry name" value="TRANSLATION INITIATION FACTOR IF-3"/>
    <property type="match status" value="1"/>
</dbReference>
<dbReference type="PANTHER" id="PTHR10938:SF0">
    <property type="entry name" value="TRANSLATION INITIATION FACTOR IF-3, MITOCHONDRIAL"/>
    <property type="match status" value="1"/>
</dbReference>
<dbReference type="Pfam" id="PF00707">
    <property type="entry name" value="IF3_C"/>
    <property type="match status" value="1"/>
</dbReference>
<dbReference type="Pfam" id="PF05198">
    <property type="entry name" value="IF3_N"/>
    <property type="match status" value="1"/>
</dbReference>
<dbReference type="SUPFAM" id="SSF55200">
    <property type="entry name" value="Translation initiation factor IF3, C-terminal domain"/>
    <property type="match status" value="1"/>
</dbReference>
<dbReference type="SUPFAM" id="SSF54364">
    <property type="entry name" value="Translation initiation factor IF3, N-terminal domain"/>
    <property type="match status" value="1"/>
</dbReference>
<dbReference type="PROSITE" id="PS00938">
    <property type="entry name" value="IF3"/>
    <property type="match status" value="1"/>
</dbReference>
<sequence length="185" mass="21165">MFFSNKTKEVKTIAKQDLFINDEIRVREVRLIGLEGEQLGIKPLSEAQALADNANVDLVLIQPQAKPPVAKIMDYGKFKFEYQKKQKEQRKKQSVVTVKEVRLSPTIDKGDFDTKLRNARKFLEKGNKVKVSIRFKGRMITHKEIGAKVLAEFAEATQDIAIIEQRAKMDGRQMFMQLAPATDKK</sequence>
<reference key="1">
    <citation type="journal article" date="2010" name="Genome Biol.">
        <title>Structure and dynamics of the pan-genome of Streptococcus pneumoniae and closely related species.</title>
        <authorList>
            <person name="Donati C."/>
            <person name="Hiller N.L."/>
            <person name="Tettelin H."/>
            <person name="Muzzi A."/>
            <person name="Croucher N.J."/>
            <person name="Angiuoli S.V."/>
            <person name="Oggioni M."/>
            <person name="Dunning Hotopp J.C."/>
            <person name="Hu F.Z."/>
            <person name="Riley D.R."/>
            <person name="Covacci A."/>
            <person name="Mitchell T.J."/>
            <person name="Bentley S.D."/>
            <person name="Kilian M."/>
            <person name="Ehrlich G.D."/>
            <person name="Rappuoli R."/>
            <person name="Moxon E.R."/>
            <person name="Masignani V."/>
        </authorList>
    </citation>
    <scope>NUCLEOTIDE SEQUENCE [LARGE SCALE GENOMIC DNA]</scope>
    <source>
        <strain>Hungary19A-6</strain>
    </source>
</reference>
<organism>
    <name type="scientific">Streptococcus pneumoniae (strain Hungary19A-6)</name>
    <dbReference type="NCBI Taxonomy" id="487214"/>
    <lineage>
        <taxon>Bacteria</taxon>
        <taxon>Bacillati</taxon>
        <taxon>Bacillota</taxon>
        <taxon>Bacilli</taxon>
        <taxon>Lactobacillales</taxon>
        <taxon>Streptococcaceae</taxon>
        <taxon>Streptococcus</taxon>
    </lineage>
</organism>
<name>IF3_STRPI</name>
<keyword id="KW-0963">Cytoplasm</keyword>
<keyword id="KW-0396">Initiation factor</keyword>
<keyword id="KW-0648">Protein biosynthesis</keyword>
<proteinExistence type="inferred from homology"/>
<comment type="function">
    <text evidence="1">IF-3 binds to the 30S ribosomal subunit and shifts the equilibrium between 70S ribosomes and their 50S and 30S subunits in favor of the free subunits, thus enhancing the availability of 30S subunits on which protein synthesis initiation begins.</text>
</comment>
<comment type="subunit">
    <text evidence="1">Monomer.</text>
</comment>
<comment type="subcellular location">
    <subcellularLocation>
        <location evidence="1">Cytoplasm</location>
    </subcellularLocation>
</comment>
<comment type="similarity">
    <text evidence="1">Belongs to the IF-3 family.</text>
</comment>
<evidence type="ECO:0000255" key="1">
    <source>
        <dbReference type="HAMAP-Rule" id="MF_00080"/>
    </source>
</evidence>
<accession>B1IBB9</accession>
<gene>
    <name evidence="1" type="primary">infC</name>
    <name type="ordered locus">SPH_1060</name>
</gene>
<protein>
    <recommendedName>
        <fullName evidence="1">Translation initiation factor IF-3</fullName>
    </recommendedName>
</protein>
<feature type="chain" id="PRO_1000092786" description="Translation initiation factor IF-3">
    <location>
        <begin position="1"/>
        <end position="185"/>
    </location>
</feature>